<dbReference type="EC" id="6.3.4.4" evidence="1"/>
<dbReference type="EMBL" id="AE017285">
    <property type="protein sequence ID" value="AAS97674.1"/>
    <property type="molecule type" value="Genomic_DNA"/>
</dbReference>
<dbReference type="RefSeq" id="WP_010940462.1">
    <property type="nucleotide sequence ID" value="NC_002937.3"/>
</dbReference>
<dbReference type="RefSeq" id="YP_012414.1">
    <property type="nucleotide sequence ID" value="NC_002937.3"/>
</dbReference>
<dbReference type="SMR" id="Q725K9"/>
<dbReference type="IntAct" id="Q725K9">
    <property type="interactions" value="1"/>
</dbReference>
<dbReference type="STRING" id="882.DVU_3204"/>
<dbReference type="PaxDb" id="882-DVU_3204"/>
<dbReference type="EnsemblBacteria" id="AAS97674">
    <property type="protein sequence ID" value="AAS97674"/>
    <property type="gene ID" value="DVU_3204"/>
</dbReference>
<dbReference type="KEGG" id="dvu:DVU_3204"/>
<dbReference type="PATRIC" id="fig|882.5.peg.2911"/>
<dbReference type="eggNOG" id="COG0104">
    <property type="taxonomic scope" value="Bacteria"/>
</dbReference>
<dbReference type="HOGENOM" id="CLU_029848_0_0_7"/>
<dbReference type="OrthoDB" id="9807553at2"/>
<dbReference type="PhylomeDB" id="Q725K9"/>
<dbReference type="UniPathway" id="UPA00075">
    <property type="reaction ID" value="UER00335"/>
</dbReference>
<dbReference type="Proteomes" id="UP000002194">
    <property type="component" value="Chromosome"/>
</dbReference>
<dbReference type="GO" id="GO:0005737">
    <property type="term" value="C:cytoplasm"/>
    <property type="evidence" value="ECO:0007669"/>
    <property type="project" value="UniProtKB-SubCell"/>
</dbReference>
<dbReference type="GO" id="GO:0004019">
    <property type="term" value="F:adenylosuccinate synthase activity"/>
    <property type="evidence" value="ECO:0007669"/>
    <property type="project" value="UniProtKB-UniRule"/>
</dbReference>
<dbReference type="GO" id="GO:0005525">
    <property type="term" value="F:GTP binding"/>
    <property type="evidence" value="ECO:0007669"/>
    <property type="project" value="UniProtKB-UniRule"/>
</dbReference>
<dbReference type="GO" id="GO:0000287">
    <property type="term" value="F:magnesium ion binding"/>
    <property type="evidence" value="ECO:0007669"/>
    <property type="project" value="UniProtKB-UniRule"/>
</dbReference>
<dbReference type="GO" id="GO:0044208">
    <property type="term" value="P:'de novo' AMP biosynthetic process"/>
    <property type="evidence" value="ECO:0007669"/>
    <property type="project" value="UniProtKB-UniRule"/>
</dbReference>
<dbReference type="GO" id="GO:0046040">
    <property type="term" value="P:IMP metabolic process"/>
    <property type="evidence" value="ECO:0007669"/>
    <property type="project" value="TreeGrafter"/>
</dbReference>
<dbReference type="CDD" id="cd03108">
    <property type="entry name" value="AdSS"/>
    <property type="match status" value="1"/>
</dbReference>
<dbReference type="FunFam" id="1.10.300.10:FF:000001">
    <property type="entry name" value="Adenylosuccinate synthetase"/>
    <property type="match status" value="1"/>
</dbReference>
<dbReference type="FunFam" id="3.90.170.10:FF:000001">
    <property type="entry name" value="Adenylosuccinate synthetase"/>
    <property type="match status" value="1"/>
</dbReference>
<dbReference type="Gene3D" id="3.40.440.10">
    <property type="entry name" value="Adenylosuccinate Synthetase, subunit A, domain 1"/>
    <property type="match status" value="1"/>
</dbReference>
<dbReference type="Gene3D" id="1.10.300.10">
    <property type="entry name" value="Adenylosuccinate Synthetase, subunit A, domain 2"/>
    <property type="match status" value="1"/>
</dbReference>
<dbReference type="Gene3D" id="3.90.170.10">
    <property type="entry name" value="Adenylosuccinate Synthetase, subunit A, domain 3"/>
    <property type="match status" value="1"/>
</dbReference>
<dbReference type="HAMAP" id="MF_00011">
    <property type="entry name" value="Adenylosucc_synth"/>
    <property type="match status" value="1"/>
</dbReference>
<dbReference type="InterPro" id="IPR018220">
    <property type="entry name" value="Adenylosuccin_syn_GTP-bd"/>
</dbReference>
<dbReference type="InterPro" id="IPR033128">
    <property type="entry name" value="Adenylosuccin_syn_Lys_AS"/>
</dbReference>
<dbReference type="InterPro" id="IPR042109">
    <property type="entry name" value="Adenylosuccinate_synth_dom1"/>
</dbReference>
<dbReference type="InterPro" id="IPR042110">
    <property type="entry name" value="Adenylosuccinate_synth_dom2"/>
</dbReference>
<dbReference type="InterPro" id="IPR042111">
    <property type="entry name" value="Adenylosuccinate_synth_dom3"/>
</dbReference>
<dbReference type="InterPro" id="IPR001114">
    <property type="entry name" value="Adenylosuccinate_synthetase"/>
</dbReference>
<dbReference type="InterPro" id="IPR027417">
    <property type="entry name" value="P-loop_NTPase"/>
</dbReference>
<dbReference type="NCBIfam" id="NF002223">
    <property type="entry name" value="PRK01117.1"/>
    <property type="match status" value="1"/>
</dbReference>
<dbReference type="NCBIfam" id="TIGR00184">
    <property type="entry name" value="purA"/>
    <property type="match status" value="1"/>
</dbReference>
<dbReference type="PANTHER" id="PTHR11846">
    <property type="entry name" value="ADENYLOSUCCINATE SYNTHETASE"/>
    <property type="match status" value="1"/>
</dbReference>
<dbReference type="PANTHER" id="PTHR11846:SF0">
    <property type="entry name" value="ADENYLOSUCCINATE SYNTHETASE"/>
    <property type="match status" value="1"/>
</dbReference>
<dbReference type="Pfam" id="PF00709">
    <property type="entry name" value="Adenylsucc_synt"/>
    <property type="match status" value="1"/>
</dbReference>
<dbReference type="SMART" id="SM00788">
    <property type="entry name" value="Adenylsucc_synt"/>
    <property type="match status" value="1"/>
</dbReference>
<dbReference type="SUPFAM" id="SSF52540">
    <property type="entry name" value="P-loop containing nucleoside triphosphate hydrolases"/>
    <property type="match status" value="1"/>
</dbReference>
<dbReference type="PROSITE" id="PS01266">
    <property type="entry name" value="ADENYLOSUCCIN_SYN_1"/>
    <property type="match status" value="1"/>
</dbReference>
<dbReference type="PROSITE" id="PS00513">
    <property type="entry name" value="ADENYLOSUCCIN_SYN_2"/>
    <property type="match status" value="1"/>
</dbReference>
<keyword id="KW-0963">Cytoplasm</keyword>
<keyword id="KW-0342">GTP-binding</keyword>
<keyword id="KW-0436">Ligase</keyword>
<keyword id="KW-0460">Magnesium</keyword>
<keyword id="KW-0479">Metal-binding</keyword>
<keyword id="KW-0547">Nucleotide-binding</keyword>
<keyword id="KW-0658">Purine biosynthesis</keyword>
<keyword id="KW-1185">Reference proteome</keyword>
<protein>
    <recommendedName>
        <fullName evidence="1">Adenylosuccinate synthetase</fullName>
        <shortName evidence="1">AMPSase</shortName>
        <shortName evidence="1">AdSS</shortName>
        <ecNumber evidence="1">6.3.4.4</ecNumber>
    </recommendedName>
    <alternativeName>
        <fullName evidence="1">IMP--aspartate ligase</fullName>
    </alternativeName>
</protein>
<organism>
    <name type="scientific">Nitratidesulfovibrio vulgaris (strain ATCC 29579 / DSM 644 / CCUG 34227 / NCIMB 8303 / VKM B-1760 / Hildenborough)</name>
    <name type="common">Desulfovibrio vulgaris</name>
    <dbReference type="NCBI Taxonomy" id="882"/>
    <lineage>
        <taxon>Bacteria</taxon>
        <taxon>Pseudomonadati</taxon>
        <taxon>Thermodesulfobacteriota</taxon>
        <taxon>Desulfovibrionia</taxon>
        <taxon>Desulfovibrionales</taxon>
        <taxon>Desulfovibrionaceae</taxon>
        <taxon>Nitratidesulfovibrio</taxon>
    </lineage>
</organism>
<evidence type="ECO:0000255" key="1">
    <source>
        <dbReference type="HAMAP-Rule" id="MF_00011"/>
    </source>
</evidence>
<sequence>MSNVVVMGAQWGDEGKGKIVDLLTRESDVIVRFQGGNNAGHTVLVGEKQYILHLIPSGILHEGKKCLIGNGVVLDPEVFCREIDSLRAQGVDMSPARLMISRKTHLIMPYHKVLDQAREAHKCKDAKIGTTGRGIGPCYEDKSARIGVRAADLAMPELLRSKIEAALVEKNALFTGLYGQQPLDADAVFEEVMAHGAKLVPYLADVSSEIHDAWAEGRSVLFEGAQGTHLDIDHGTYPFVTSSNTVSGNAAAGSGVPPTKLDRIIAIVKAYTTRVGAGPFPTELDDATGEYLQQKGHEFGATTGRKRRCGWLDAVVLRESVRLNGPTDIALTKLDVLSGLKEISICTAYIYRGEQVAYPPQEQNGMAHVTPVYETIPGWDDDITGCTTWESLPAPVKAYVLRIEEITGVRISLVSVGPERDQTIRR</sequence>
<proteinExistence type="inferred from homology"/>
<accession>Q725K9</accession>
<gene>
    <name evidence="1" type="primary">purA</name>
    <name type="ordered locus">DVU_3204</name>
</gene>
<feature type="chain" id="PRO_0000224276" description="Adenylosuccinate synthetase">
    <location>
        <begin position="1"/>
        <end position="426"/>
    </location>
</feature>
<feature type="active site" description="Proton acceptor" evidence="1">
    <location>
        <position position="13"/>
    </location>
</feature>
<feature type="active site" description="Proton donor" evidence="1">
    <location>
        <position position="41"/>
    </location>
</feature>
<feature type="binding site" evidence="1">
    <location>
        <begin position="12"/>
        <end position="18"/>
    </location>
    <ligand>
        <name>GTP</name>
        <dbReference type="ChEBI" id="CHEBI:37565"/>
    </ligand>
</feature>
<feature type="binding site" description="in other chain" evidence="1">
    <location>
        <begin position="13"/>
        <end position="16"/>
    </location>
    <ligand>
        <name>IMP</name>
        <dbReference type="ChEBI" id="CHEBI:58053"/>
        <note>ligand shared between dimeric partners</note>
    </ligand>
</feature>
<feature type="binding site" evidence="1">
    <location>
        <position position="13"/>
    </location>
    <ligand>
        <name>Mg(2+)</name>
        <dbReference type="ChEBI" id="CHEBI:18420"/>
    </ligand>
</feature>
<feature type="binding site" description="in other chain" evidence="1">
    <location>
        <begin position="38"/>
        <end position="41"/>
    </location>
    <ligand>
        <name>IMP</name>
        <dbReference type="ChEBI" id="CHEBI:58053"/>
        <note>ligand shared between dimeric partners</note>
    </ligand>
</feature>
<feature type="binding site" evidence="1">
    <location>
        <begin position="40"/>
        <end position="42"/>
    </location>
    <ligand>
        <name>GTP</name>
        <dbReference type="ChEBI" id="CHEBI:37565"/>
    </ligand>
</feature>
<feature type="binding site" evidence="1">
    <location>
        <position position="40"/>
    </location>
    <ligand>
        <name>Mg(2+)</name>
        <dbReference type="ChEBI" id="CHEBI:18420"/>
    </ligand>
</feature>
<feature type="binding site" description="in other chain" evidence="1">
    <location>
        <position position="131"/>
    </location>
    <ligand>
        <name>IMP</name>
        <dbReference type="ChEBI" id="CHEBI:58053"/>
        <note>ligand shared between dimeric partners</note>
    </ligand>
</feature>
<feature type="binding site" evidence="1">
    <location>
        <position position="145"/>
    </location>
    <ligand>
        <name>IMP</name>
        <dbReference type="ChEBI" id="CHEBI:58053"/>
        <note>ligand shared between dimeric partners</note>
    </ligand>
</feature>
<feature type="binding site" description="in other chain" evidence="1">
    <location>
        <position position="226"/>
    </location>
    <ligand>
        <name>IMP</name>
        <dbReference type="ChEBI" id="CHEBI:58053"/>
        <note>ligand shared between dimeric partners</note>
    </ligand>
</feature>
<feature type="binding site" description="in other chain" evidence="1">
    <location>
        <position position="241"/>
    </location>
    <ligand>
        <name>IMP</name>
        <dbReference type="ChEBI" id="CHEBI:58053"/>
        <note>ligand shared between dimeric partners</note>
    </ligand>
</feature>
<feature type="binding site" evidence="1">
    <location>
        <begin position="301"/>
        <end position="307"/>
    </location>
    <ligand>
        <name>substrate</name>
    </ligand>
</feature>
<feature type="binding site" description="in other chain" evidence="1">
    <location>
        <position position="305"/>
    </location>
    <ligand>
        <name>IMP</name>
        <dbReference type="ChEBI" id="CHEBI:58053"/>
        <note>ligand shared between dimeric partners</note>
    </ligand>
</feature>
<feature type="binding site" evidence="1">
    <location>
        <position position="307"/>
    </location>
    <ligand>
        <name>GTP</name>
        <dbReference type="ChEBI" id="CHEBI:37565"/>
    </ligand>
</feature>
<feature type="binding site" evidence="1">
    <location>
        <begin position="333"/>
        <end position="335"/>
    </location>
    <ligand>
        <name>GTP</name>
        <dbReference type="ChEBI" id="CHEBI:37565"/>
    </ligand>
</feature>
<feature type="binding site" evidence="1">
    <location>
        <begin position="415"/>
        <end position="417"/>
    </location>
    <ligand>
        <name>GTP</name>
        <dbReference type="ChEBI" id="CHEBI:37565"/>
    </ligand>
</feature>
<name>PURA_NITV2</name>
<comment type="function">
    <text evidence="1">Plays an important role in the de novo pathway of purine nucleotide biosynthesis. Catalyzes the first committed step in the biosynthesis of AMP from IMP.</text>
</comment>
<comment type="catalytic activity">
    <reaction evidence="1">
        <text>IMP + L-aspartate + GTP = N(6)-(1,2-dicarboxyethyl)-AMP + GDP + phosphate + 2 H(+)</text>
        <dbReference type="Rhea" id="RHEA:15753"/>
        <dbReference type="ChEBI" id="CHEBI:15378"/>
        <dbReference type="ChEBI" id="CHEBI:29991"/>
        <dbReference type="ChEBI" id="CHEBI:37565"/>
        <dbReference type="ChEBI" id="CHEBI:43474"/>
        <dbReference type="ChEBI" id="CHEBI:57567"/>
        <dbReference type="ChEBI" id="CHEBI:58053"/>
        <dbReference type="ChEBI" id="CHEBI:58189"/>
        <dbReference type="EC" id="6.3.4.4"/>
    </reaction>
</comment>
<comment type="cofactor">
    <cofactor evidence="1">
        <name>Mg(2+)</name>
        <dbReference type="ChEBI" id="CHEBI:18420"/>
    </cofactor>
    <text evidence="1">Binds 1 Mg(2+) ion per subunit.</text>
</comment>
<comment type="pathway">
    <text evidence="1">Purine metabolism; AMP biosynthesis via de novo pathway; AMP from IMP: step 1/2.</text>
</comment>
<comment type="subunit">
    <text evidence="1">Homodimer.</text>
</comment>
<comment type="subcellular location">
    <subcellularLocation>
        <location evidence="1">Cytoplasm</location>
    </subcellularLocation>
</comment>
<comment type="similarity">
    <text evidence="1">Belongs to the adenylosuccinate synthetase family.</text>
</comment>
<reference key="1">
    <citation type="journal article" date="2004" name="Nat. Biotechnol.">
        <title>The genome sequence of the anaerobic, sulfate-reducing bacterium Desulfovibrio vulgaris Hildenborough.</title>
        <authorList>
            <person name="Heidelberg J.F."/>
            <person name="Seshadri R."/>
            <person name="Haveman S.A."/>
            <person name="Hemme C.L."/>
            <person name="Paulsen I.T."/>
            <person name="Kolonay J.F."/>
            <person name="Eisen J.A."/>
            <person name="Ward N.L."/>
            <person name="Methe B.A."/>
            <person name="Brinkac L.M."/>
            <person name="Daugherty S.C."/>
            <person name="DeBoy R.T."/>
            <person name="Dodson R.J."/>
            <person name="Durkin A.S."/>
            <person name="Madupu R."/>
            <person name="Nelson W.C."/>
            <person name="Sullivan S.A."/>
            <person name="Fouts D.E."/>
            <person name="Haft D.H."/>
            <person name="Selengut J."/>
            <person name="Peterson J.D."/>
            <person name="Davidsen T.M."/>
            <person name="Zafar N."/>
            <person name="Zhou L."/>
            <person name="Radune D."/>
            <person name="Dimitrov G."/>
            <person name="Hance M."/>
            <person name="Tran K."/>
            <person name="Khouri H.M."/>
            <person name="Gill J."/>
            <person name="Utterback T.R."/>
            <person name="Feldblyum T.V."/>
            <person name="Wall J.D."/>
            <person name="Voordouw G."/>
            <person name="Fraser C.M."/>
        </authorList>
    </citation>
    <scope>NUCLEOTIDE SEQUENCE [LARGE SCALE GENOMIC DNA]</scope>
    <source>
        <strain>ATCC 29579 / DSM 644 / CCUG 34227 / NCIMB 8303 / VKM B-1760 / Hildenborough</strain>
    </source>
</reference>